<accession>Q5BFU1</accession>
<accession>C8VSB7</accession>
<evidence type="ECO:0000250" key="1"/>
<evidence type="ECO:0000255" key="2">
    <source>
        <dbReference type="PROSITE-ProRule" id="PRU00541"/>
    </source>
</evidence>
<evidence type="ECO:0000255" key="3">
    <source>
        <dbReference type="PROSITE-ProRule" id="PRU00542"/>
    </source>
</evidence>
<evidence type="ECO:0000256" key="4">
    <source>
        <dbReference type="SAM" id="MobiDB-lite"/>
    </source>
</evidence>
<evidence type="ECO:0000305" key="5"/>
<sequence length="812" mass="92025">MAPSNGHRNGKHAKSSNKSGNLKRKRVQEDLSSLIKRVEDLDLKAKYESFSDLPISEPTLSGLTSSHFKTLTDIQSRAISHALKGRDVLGAAKTGSGKTLAFLVPILENLYRKQWSDHDGLGALIISPTRELAIQIFEVLRKIGRYHTFSAGLVIGGKSLKEEQERLGRMNILVCTPGRMLQHLDQTAFFETYNLQMLVLDEADRIMDMGFQKTVDAIIGHLPPERQTLLFSATQTKKVSDLARLSLQDPEYVAVHEAASSATPSKLQQHYVVTPLPQKLDTLWSFIRSNLKSKTIVFMSSGKQVRFVYESFRHMQPGIPLLHLHGRQKQGGRLDITTRFSQAQHAVLFSTDVAARGLDFPAVDWVIQLDCPEDADTYIHRVGRTARYERDGRAVLFLDPSEEKGMLRRLEQKRVTVERINVRANKQQSIKNQLQNMCFKDPELKYLGQKAFISYVKSVYIQKDKETFNLKELKLDDFAASLGLPGAPRIKFIKGDDTKERKNASRATAYLTSGDEESDEEGGKKKQPKEKEVRTKYDRMFERRNQDVLAEHYSKLINDDGTIADSKNTEEADEDEDFLSVKRRFDAGDDALHAEDSSASDSDASDSEAEDHTEKKDPKVVKISDKDTLVIDSKRREKLLKSKKKLLKFKGKGTKLVYDDEGNAHELYEMEDEEAFKARGDAKEQQARFLAEEAARTQRADMEDKEIAKQKRREKKEKRKARERELLAEEEREERVAQLVPFDEDEDMGDAGGYSQSSDGEEEAPRPSKRAKVEEPKAVPWYKKEAGKKNDAGEKQIQTLEDLESLATGLLG</sequence>
<comment type="function">
    <text evidence="1">ATP-dependent RNA helicase required for ribosome biogenesis. Involved in the release of U14 snoRNA in pre-ribosomal complexes. Required for pre-rRNA cleavage at site A2 (By similarity).</text>
</comment>
<comment type="catalytic activity">
    <reaction>
        <text>ATP + H2O = ADP + phosphate + H(+)</text>
        <dbReference type="Rhea" id="RHEA:13065"/>
        <dbReference type="ChEBI" id="CHEBI:15377"/>
        <dbReference type="ChEBI" id="CHEBI:15378"/>
        <dbReference type="ChEBI" id="CHEBI:30616"/>
        <dbReference type="ChEBI" id="CHEBI:43474"/>
        <dbReference type="ChEBI" id="CHEBI:456216"/>
        <dbReference type="EC" id="3.6.4.13"/>
    </reaction>
</comment>
<comment type="subunit">
    <text evidence="1">Interacts with the U3 and U14 snoRNAs. Associates with pre-ribosomal complexes (By similarity).</text>
</comment>
<comment type="subcellular location">
    <subcellularLocation>
        <location evidence="1">Nucleus</location>
        <location evidence="1">Nucleolus</location>
    </subcellularLocation>
</comment>
<comment type="domain">
    <text>The Q motif is unique to and characteristic of the DEAD box family of RNA helicases and controls ATP binding and hydrolysis.</text>
</comment>
<comment type="similarity">
    <text evidence="5">Belongs to the DEAD box helicase family. DDX10/DBP4 subfamily.</text>
</comment>
<organism>
    <name type="scientific">Emericella nidulans (strain FGSC A4 / ATCC 38163 / CBS 112.46 / NRRL 194 / M139)</name>
    <name type="common">Aspergillus nidulans</name>
    <dbReference type="NCBI Taxonomy" id="227321"/>
    <lineage>
        <taxon>Eukaryota</taxon>
        <taxon>Fungi</taxon>
        <taxon>Dikarya</taxon>
        <taxon>Ascomycota</taxon>
        <taxon>Pezizomycotina</taxon>
        <taxon>Eurotiomycetes</taxon>
        <taxon>Eurotiomycetidae</taxon>
        <taxon>Eurotiales</taxon>
        <taxon>Aspergillaceae</taxon>
        <taxon>Aspergillus</taxon>
        <taxon>Aspergillus subgen. Nidulantes</taxon>
    </lineage>
</organism>
<reference key="1">
    <citation type="journal article" date="2005" name="Nature">
        <title>Sequencing of Aspergillus nidulans and comparative analysis with A. fumigatus and A. oryzae.</title>
        <authorList>
            <person name="Galagan J.E."/>
            <person name="Calvo S.E."/>
            <person name="Cuomo C."/>
            <person name="Ma L.-J."/>
            <person name="Wortman J.R."/>
            <person name="Batzoglou S."/>
            <person name="Lee S.-I."/>
            <person name="Bastuerkmen M."/>
            <person name="Spevak C.C."/>
            <person name="Clutterbuck J."/>
            <person name="Kapitonov V."/>
            <person name="Jurka J."/>
            <person name="Scazzocchio C."/>
            <person name="Farman M.L."/>
            <person name="Butler J."/>
            <person name="Purcell S."/>
            <person name="Harris S."/>
            <person name="Braus G.H."/>
            <person name="Draht O."/>
            <person name="Busch S."/>
            <person name="D'Enfert C."/>
            <person name="Bouchier C."/>
            <person name="Goldman G.H."/>
            <person name="Bell-Pedersen D."/>
            <person name="Griffiths-Jones S."/>
            <person name="Doonan J.H."/>
            <person name="Yu J."/>
            <person name="Vienken K."/>
            <person name="Pain A."/>
            <person name="Freitag M."/>
            <person name="Selker E.U."/>
            <person name="Archer D.B."/>
            <person name="Penalva M.A."/>
            <person name="Oakley B.R."/>
            <person name="Momany M."/>
            <person name="Tanaka T."/>
            <person name="Kumagai T."/>
            <person name="Asai K."/>
            <person name="Machida M."/>
            <person name="Nierman W.C."/>
            <person name="Denning D.W."/>
            <person name="Caddick M.X."/>
            <person name="Hynes M."/>
            <person name="Paoletti M."/>
            <person name="Fischer R."/>
            <person name="Miller B.L."/>
            <person name="Dyer P.S."/>
            <person name="Sachs M.S."/>
            <person name="Osmani S.A."/>
            <person name="Birren B.W."/>
        </authorList>
    </citation>
    <scope>NUCLEOTIDE SEQUENCE [LARGE SCALE GENOMIC DNA]</scope>
    <source>
        <strain>FGSC A4 / ATCC 38163 / CBS 112.46 / NRRL 194 / M139</strain>
    </source>
</reference>
<reference key="2">
    <citation type="journal article" date="2009" name="Fungal Genet. Biol.">
        <title>The 2008 update of the Aspergillus nidulans genome annotation: a community effort.</title>
        <authorList>
            <person name="Wortman J.R."/>
            <person name="Gilsenan J.M."/>
            <person name="Joardar V."/>
            <person name="Deegan J."/>
            <person name="Clutterbuck J."/>
            <person name="Andersen M.R."/>
            <person name="Archer D."/>
            <person name="Bencina M."/>
            <person name="Braus G."/>
            <person name="Coutinho P."/>
            <person name="von Dohren H."/>
            <person name="Doonan J."/>
            <person name="Driessen A.J."/>
            <person name="Durek P."/>
            <person name="Espeso E."/>
            <person name="Fekete E."/>
            <person name="Flipphi M."/>
            <person name="Estrada C.G."/>
            <person name="Geysens S."/>
            <person name="Goldman G."/>
            <person name="de Groot P.W."/>
            <person name="Hansen K."/>
            <person name="Harris S.D."/>
            <person name="Heinekamp T."/>
            <person name="Helmstaedt K."/>
            <person name="Henrissat B."/>
            <person name="Hofmann G."/>
            <person name="Homan T."/>
            <person name="Horio T."/>
            <person name="Horiuchi H."/>
            <person name="James S."/>
            <person name="Jones M."/>
            <person name="Karaffa L."/>
            <person name="Karanyi Z."/>
            <person name="Kato M."/>
            <person name="Keller N."/>
            <person name="Kelly D.E."/>
            <person name="Kiel J.A."/>
            <person name="Kim J.M."/>
            <person name="van der Klei I.J."/>
            <person name="Klis F.M."/>
            <person name="Kovalchuk A."/>
            <person name="Krasevec N."/>
            <person name="Kubicek C.P."/>
            <person name="Liu B."/>
            <person name="Maccabe A."/>
            <person name="Meyer V."/>
            <person name="Mirabito P."/>
            <person name="Miskei M."/>
            <person name="Mos M."/>
            <person name="Mullins J."/>
            <person name="Nelson D.R."/>
            <person name="Nielsen J."/>
            <person name="Oakley B.R."/>
            <person name="Osmani S.A."/>
            <person name="Pakula T."/>
            <person name="Paszewski A."/>
            <person name="Paulsen I."/>
            <person name="Pilsyk S."/>
            <person name="Pocsi I."/>
            <person name="Punt P.J."/>
            <person name="Ram A.F."/>
            <person name="Ren Q."/>
            <person name="Robellet X."/>
            <person name="Robson G."/>
            <person name="Seiboth B."/>
            <person name="van Solingen P."/>
            <person name="Specht T."/>
            <person name="Sun J."/>
            <person name="Taheri-Talesh N."/>
            <person name="Takeshita N."/>
            <person name="Ussery D."/>
            <person name="vanKuyk P.A."/>
            <person name="Visser H."/>
            <person name="van de Vondervoort P.J."/>
            <person name="de Vries R.P."/>
            <person name="Walton J."/>
            <person name="Xiang X."/>
            <person name="Xiong Y."/>
            <person name="Zeng A.P."/>
            <person name="Brandt B.W."/>
            <person name="Cornell M.J."/>
            <person name="van den Hondel C.A."/>
            <person name="Visser J."/>
            <person name="Oliver S.G."/>
            <person name="Turner G."/>
        </authorList>
    </citation>
    <scope>GENOME REANNOTATION</scope>
    <source>
        <strain>FGSC A4 / ATCC 38163 / CBS 112.46 / NRRL 194 / M139</strain>
    </source>
</reference>
<feature type="chain" id="PRO_0000232199" description="ATP-dependent RNA helicase dbp4">
    <location>
        <begin position="1"/>
        <end position="812"/>
    </location>
</feature>
<feature type="domain" description="Helicase ATP-binding" evidence="2">
    <location>
        <begin position="79"/>
        <end position="253"/>
    </location>
</feature>
<feature type="domain" description="Helicase C-terminal" evidence="3">
    <location>
        <begin position="279"/>
        <end position="438"/>
    </location>
</feature>
<feature type="region of interest" description="Disordered" evidence="4">
    <location>
        <begin position="1"/>
        <end position="28"/>
    </location>
</feature>
<feature type="region of interest" description="Disordered" evidence="4">
    <location>
        <begin position="503"/>
        <end position="538"/>
    </location>
</feature>
<feature type="region of interest" description="Disordered" evidence="4">
    <location>
        <begin position="560"/>
        <end position="626"/>
    </location>
</feature>
<feature type="region of interest" description="Disordered" evidence="4">
    <location>
        <begin position="687"/>
        <end position="797"/>
    </location>
</feature>
<feature type="short sequence motif" description="Q motif">
    <location>
        <begin position="48"/>
        <end position="76"/>
    </location>
</feature>
<feature type="short sequence motif" description="DEAD box">
    <location>
        <begin position="201"/>
        <end position="204"/>
    </location>
</feature>
<feature type="compositionally biased region" description="Basic residues" evidence="4">
    <location>
        <begin position="8"/>
        <end position="26"/>
    </location>
</feature>
<feature type="compositionally biased region" description="Basic and acidic residues" evidence="4">
    <location>
        <begin position="521"/>
        <end position="538"/>
    </location>
</feature>
<feature type="compositionally biased region" description="Basic and acidic residues" evidence="4">
    <location>
        <begin position="579"/>
        <end position="596"/>
    </location>
</feature>
<feature type="compositionally biased region" description="Basic and acidic residues" evidence="4">
    <location>
        <begin position="610"/>
        <end position="626"/>
    </location>
</feature>
<feature type="compositionally biased region" description="Basic and acidic residues" evidence="4">
    <location>
        <begin position="687"/>
        <end position="709"/>
    </location>
</feature>
<feature type="compositionally biased region" description="Basic residues" evidence="4">
    <location>
        <begin position="710"/>
        <end position="719"/>
    </location>
</feature>
<feature type="compositionally biased region" description="Basic and acidic residues" evidence="4">
    <location>
        <begin position="720"/>
        <end position="736"/>
    </location>
</feature>
<feature type="compositionally biased region" description="Basic and acidic residues" evidence="4">
    <location>
        <begin position="763"/>
        <end position="794"/>
    </location>
</feature>
<feature type="binding site" evidence="2">
    <location>
        <begin position="92"/>
        <end position="99"/>
    </location>
    <ligand>
        <name>ATP</name>
        <dbReference type="ChEBI" id="CHEBI:30616"/>
    </ligand>
</feature>
<proteinExistence type="inferred from homology"/>
<protein>
    <recommendedName>
        <fullName>ATP-dependent RNA helicase dbp4</fullName>
        <ecNumber>3.6.4.13</ecNumber>
    </recommendedName>
</protein>
<name>DBP4_EMENI</name>
<dbReference type="EC" id="3.6.4.13"/>
<dbReference type="EMBL" id="AACD01000007">
    <property type="protein sequence ID" value="EAA66688.1"/>
    <property type="molecule type" value="Genomic_DNA"/>
</dbReference>
<dbReference type="EMBL" id="BN001308">
    <property type="protein sequence ID" value="CBF89171.1"/>
    <property type="molecule type" value="Genomic_DNA"/>
</dbReference>
<dbReference type="RefSeq" id="XP_658193.1">
    <property type="nucleotide sequence ID" value="XM_653101.1"/>
</dbReference>
<dbReference type="SMR" id="Q5BFU1"/>
<dbReference type="FunCoup" id="Q5BFU1">
    <property type="interactions" value="1007"/>
</dbReference>
<dbReference type="STRING" id="227321.Q5BFU1"/>
<dbReference type="EnsemblFungi" id="CBF89171">
    <property type="protein sequence ID" value="CBF89171"/>
    <property type="gene ID" value="ANIA_00589"/>
</dbReference>
<dbReference type="KEGG" id="ani:ANIA_00589"/>
<dbReference type="eggNOG" id="KOG0343">
    <property type="taxonomic scope" value="Eukaryota"/>
</dbReference>
<dbReference type="HOGENOM" id="CLU_003041_26_1_1"/>
<dbReference type="InParanoid" id="Q5BFU1"/>
<dbReference type="OMA" id="YDKMFER"/>
<dbReference type="OrthoDB" id="10259640at2759"/>
<dbReference type="Proteomes" id="UP000000560">
    <property type="component" value="Chromosome VIII"/>
</dbReference>
<dbReference type="GO" id="GO:0005730">
    <property type="term" value="C:nucleolus"/>
    <property type="evidence" value="ECO:0007669"/>
    <property type="project" value="UniProtKB-SubCell"/>
</dbReference>
<dbReference type="GO" id="GO:0005634">
    <property type="term" value="C:nucleus"/>
    <property type="evidence" value="ECO:0000318"/>
    <property type="project" value="GO_Central"/>
</dbReference>
<dbReference type="GO" id="GO:0032040">
    <property type="term" value="C:small-subunit processome"/>
    <property type="evidence" value="ECO:0007669"/>
    <property type="project" value="EnsemblFungi"/>
</dbReference>
<dbReference type="GO" id="GO:0005524">
    <property type="term" value="F:ATP binding"/>
    <property type="evidence" value="ECO:0007669"/>
    <property type="project" value="UniProtKB-KW"/>
</dbReference>
<dbReference type="GO" id="GO:0016887">
    <property type="term" value="F:ATP hydrolysis activity"/>
    <property type="evidence" value="ECO:0007669"/>
    <property type="project" value="RHEA"/>
</dbReference>
<dbReference type="GO" id="GO:0042802">
    <property type="term" value="F:identical protein binding"/>
    <property type="evidence" value="ECO:0007669"/>
    <property type="project" value="EnsemblFungi"/>
</dbReference>
<dbReference type="GO" id="GO:0003723">
    <property type="term" value="F:RNA binding"/>
    <property type="evidence" value="ECO:0007669"/>
    <property type="project" value="UniProtKB-KW"/>
</dbReference>
<dbReference type="GO" id="GO:0003724">
    <property type="term" value="F:RNA helicase activity"/>
    <property type="evidence" value="ECO:0007669"/>
    <property type="project" value="UniProtKB-EC"/>
</dbReference>
<dbReference type="GO" id="GO:0006364">
    <property type="term" value="P:rRNA processing"/>
    <property type="evidence" value="ECO:0000318"/>
    <property type="project" value="GO_Central"/>
</dbReference>
<dbReference type="CDD" id="cd17941">
    <property type="entry name" value="DEADc_DDX10"/>
    <property type="match status" value="1"/>
</dbReference>
<dbReference type="CDD" id="cd18787">
    <property type="entry name" value="SF2_C_DEAD"/>
    <property type="match status" value="1"/>
</dbReference>
<dbReference type="Gene3D" id="3.40.50.300">
    <property type="entry name" value="P-loop containing nucleotide triphosphate hydrolases"/>
    <property type="match status" value="2"/>
</dbReference>
<dbReference type="InterPro" id="IPR011545">
    <property type="entry name" value="DEAD/DEAH_box_helicase_dom"/>
</dbReference>
<dbReference type="InterPro" id="IPR014001">
    <property type="entry name" value="Helicase_ATP-bd"/>
</dbReference>
<dbReference type="InterPro" id="IPR001650">
    <property type="entry name" value="Helicase_C-like"/>
</dbReference>
<dbReference type="InterPro" id="IPR027417">
    <property type="entry name" value="P-loop_NTPase"/>
</dbReference>
<dbReference type="InterPro" id="IPR000629">
    <property type="entry name" value="RNA-helicase_DEAD-box_CS"/>
</dbReference>
<dbReference type="InterPro" id="IPR014014">
    <property type="entry name" value="RNA_helicase_DEAD_Q_motif"/>
</dbReference>
<dbReference type="InterPro" id="IPR025313">
    <property type="entry name" value="SPB4-like_CTE"/>
</dbReference>
<dbReference type="PANTHER" id="PTHR24031">
    <property type="entry name" value="RNA HELICASE"/>
    <property type="match status" value="1"/>
</dbReference>
<dbReference type="Pfam" id="PF13959">
    <property type="entry name" value="CTE_SPB4"/>
    <property type="match status" value="1"/>
</dbReference>
<dbReference type="Pfam" id="PF00270">
    <property type="entry name" value="DEAD"/>
    <property type="match status" value="1"/>
</dbReference>
<dbReference type="Pfam" id="PF00271">
    <property type="entry name" value="Helicase_C"/>
    <property type="match status" value="1"/>
</dbReference>
<dbReference type="SMART" id="SM00487">
    <property type="entry name" value="DEXDc"/>
    <property type="match status" value="1"/>
</dbReference>
<dbReference type="SMART" id="SM01178">
    <property type="entry name" value="DUF4217"/>
    <property type="match status" value="1"/>
</dbReference>
<dbReference type="SMART" id="SM00490">
    <property type="entry name" value="HELICc"/>
    <property type="match status" value="1"/>
</dbReference>
<dbReference type="SUPFAM" id="SSF52540">
    <property type="entry name" value="P-loop containing nucleoside triphosphate hydrolases"/>
    <property type="match status" value="2"/>
</dbReference>
<dbReference type="PROSITE" id="PS00039">
    <property type="entry name" value="DEAD_ATP_HELICASE"/>
    <property type="match status" value="1"/>
</dbReference>
<dbReference type="PROSITE" id="PS51192">
    <property type="entry name" value="HELICASE_ATP_BIND_1"/>
    <property type="match status" value="1"/>
</dbReference>
<dbReference type="PROSITE" id="PS51194">
    <property type="entry name" value="HELICASE_CTER"/>
    <property type="match status" value="1"/>
</dbReference>
<dbReference type="PROSITE" id="PS51195">
    <property type="entry name" value="Q_MOTIF"/>
    <property type="match status" value="1"/>
</dbReference>
<gene>
    <name type="primary">dbp4</name>
    <name type="ORF">AN0589</name>
</gene>
<keyword id="KW-0067">ATP-binding</keyword>
<keyword id="KW-0347">Helicase</keyword>
<keyword id="KW-0378">Hydrolase</keyword>
<keyword id="KW-0547">Nucleotide-binding</keyword>
<keyword id="KW-0539">Nucleus</keyword>
<keyword id="KW-1185">Reference proteome</keyword>
<keyword id="KW-0690">Ribosome biogenesis</keyword>
<keyword id="KW-0694">RNA-binding</keyword>
<keyword id="KW-0698">rRNA processing</keyword>